<evidence type="ECO:0000255" key="1">
    <source>
        <dbReference type="HAMAP-Rule" id="MF_01339"/>
    </source>
</evidence>
<protein>
    <recommendedName>
        <fullName evidence="1">Ribulose bisphosphate carboxylase</fullName>
        <shortName evidence="1">RuBisCO</shortName>
        <ecNumber evidence="1">4.1.1.39</ecNumber>
    </recommendedName>
</protein>
<proteinExistence type="inferred from homology"/>
<sequence>MDQSNRYANLNLKESDLIAGGRHVLCAYIMKPKAGFGNFVETAAHFAAESSTGTNVEVSTTDDFTRGVDALVYEVDEAKELMKIAYPIELFDRNVIDGRAMIASFLTLTIGNNQGMGDVEYAKMHDFYVPPAYLRLFDGPSTTIKDLWRVLGRPVVDGGFIVGTIIKPKLGLRPQPFADACYDFWLGGDFIKNDEPQGNQVFAPFKDTVRAVNDAMRRAQDATGQPKLFSFNITADDHYEMLARGEYILETFGENADHVAFLVDGYVAGPAAVTTARRAFPKQYLHYHRAGHGAVTSPQSKRGYTAFVLSKMARLQGASGIHVGTMGYGKMEGEASDRDSAFMITQDSAEGPYFKQEWLGMNPTTPIISGGMNALRMPGFFANLGHSNLIMTAGGGAFGHIDGGAAGARSLRQAEQCWKQGADPVAFAKDHREFARAFESFPNDADKLYPNWRNMLKLAAA</sequence>
<reference key="1">
    <citation type="submission" date="2006-03" db="EMBL/GenBank/DDBJ databases">
        <title>Complete sequence of Rhodopseudomonas palustris BisB5.</title>
        <authorList>
            <consortium name="US DOE Joint Genome Institute"/>
            <person name="Copeland A."/>
            <person name="Lucas S."/>
            <person name="Lapidus A."/>
            <person name="Barry K."/>
            <person name="Detter J.C."/>
            <person name="Glavina del Rio T."/>
            <person name="Hammon N."/>
            <person name="Israni S."/>
            <person name="Dalin E."/>
            <person name="Tice H."/>
            <person name="Pitluck S."/>
            <person name="Chain P."/>
            <person name="Malfatti S."/>
            <person name="Shin M."/>
            <person name="Vergez L."/>
            <person name="Schmutz J."/>
            <person name="Larimer F."/>
            <person name="Land M."/>
            <person name="Hauser L."/>
            <person name="Pelletier D.A."/>
            <person name="Kyrpides N."/>
            <person name="Lykidis A."/>
            <person name="Oda Y."/>
            <person name="Harwood C.S."/>
            <person name="Richardson P."/>
        </authorList>
    </citation>
    <scope>NUCLEOTIDE SEQUENCE [LARGE SCALE GENOMIC DNA]</scope>
    <source>
        <strain>BisB5</strain>
    </source>
</reference>
<organism>
    <name type="scientific">Rhodopseudomonas palustris (strain BisB5)</name>
    <dbReference type="NCBI Taxonomy" id="316057"/>
    <lineage>
        <taxon>Bacteria</taxon>
        <taxon>Pseudomonadati</taxon>
        <taxon>Pseudomonadota</taxon>
        <taxon>Alphaproteobacteria</taxon>
        <taxon>Hyphomicrobiales</taxon>
        <taxon>Nitrobacteraceae</taxon>
        <taxon>Rhodopseudomonas</taxon>
    </lineage>
</organism>
<comment type="function">
    <text evidence="1">RuBisCO catalyzes two reactions: the carboxylation of D-ribulose 1,5-bisphosphate, the primary event in carbon dioxide fixation, as well as the oxidative fragmentation of the pentose substrate. Both reactions occur simultaneously and in competition at the same active site.</text>
</comment>
<comment type="catalytic activity">
    <reaction evidence="1">
        <text>2 (2R)-3-phosphoglycerate + 2 H(+) = D-ribulose 1,5-bisphosphate + CO2 + H2O</text>
        <dbReference type="Rhea" id="RHEA:23124"/>
        <dbReference type="ChEBI" id="CHEBI:15377"/>
        <dbReference type="ChEBI" id="CHEBI:15378"/>
        <dbReference type="ChEBI" id="CHEBI:16526"/>
        <dbReference type="ChEBI" id="CHEBI:57870"/>
        <dbReference type="ChEBI" id="CHEBI:58272"/>
        <dbReference type="EC" id="4.1.1.39"/>
    </reaction>
</comment>
<comment type="catalytic activity">
    <reaction evidence="1">
        <text>D-ribulose 1,5-bisphosphate + O2 = 2-phosphoglycolate + (2R)-3-phosphoglycerate + 2 H(+)</text>
        <dbReference type="Rhea" id="RHEA:36631"/>
        <dbReference type="ChEBI" id="CHEBI:15378"/>
        <dbReference type="ChEBI" id="CHEBI:15379"/>
        <dbReference type="ChEBI" id="CHEBI:57870"/>
        <dbReference type="ChEBI" id="CHEBI:58033"/>
        <dbReference type="ChEBI" id="CHEBI:58272"/>
    </reaction>
</comment>
<comment type="cofactor">
    <cofactor evidence="1">
        <name>Mg(2+)</name>
        <dbReference type="ChEBI" id="CHEBI:18420"/>
    </cofactor>
    <text evidence="1">Binds 1 Mg(2+) ion per subunit.</text>
</comment>
<comment type="subunit">
    <text evidence="1">Homodimer.</text>
</comment>
<comment type="miscellaneous">
    <text evidence="1">The basic functional RuBisCO is composed of a large chain homodimer in a 'head-to-tail' conformation. In contrast to form I RuBisCO, the form II RuBisCO are composed solely of large subunits.</text>
</comment>
<comment type="similarity">
    <text evidence="1">Belongs to the RuBisCO large chain family. Type II subfamily.</text>
</comment>
<dbReference type="EC" id="4.1.1.39" evidence="1"/>
<dbReference type="EMBL" id="CP000283">
    <property type="protein sequence ID" value="ABE38292.1"/>
    <property type="molecule type" value="Genomic_DNA"/>
</dbReference>
<dbReference type="SMR" id="Q37D32"/>
<dbReference type="STRING" id="316057.RPD_1054"/>
<dbReference type="KEGG" id="rpd:RPD_1054"/>
<dbReference type="eggNOG" id="COG1850">
    <property type="taxonomic scope" value="Bacteria"/>
</dbReference>
<dbReference type="HOGENOM" id="CLU_031450_3_1_5"/>
<dbReference type="BioCyc" id="RPAL316057:RPD_RS05355-MONOMER"/>
<dbReference type="Proteomes" id="UP000001818">
    <property type="component" value="Chromosome"/>
</dbReference>
<dbReference type="GO" id="GO:0000287">
    <property type="term" value="F:magnesium ion binding"/>
    <property type="evidence" value="ECO:0007669"/>
    <property type="project" value="UniProtKB-UniRule"/>
</dbReference>
<dbReference type="GO" id="GO:0004497">
    <property type="term" value="F:monooxygenase activity"/>
    <property type="evidence" value="ECO:0007669"/>
    <property type="project" value="UniProtKB-KW"/>
</dbReference>
<dbReference type="GO" id="GO:0016984">
    <property type="term" value="F:ribulose-bisphosphate carboxylase activity"/>
    <property type="evidence" value="ECO:0007669"/>
    <property type="project" value="UniProtKB-UniRule"/>
</dbReference>
<dbReference type="GO" id="GO:0019253">
    <property type="term" value="P:reductive pentose-phosphate cycle"/>
    <property type="evidence" value="ECO:0007669"/>
    <property type="project" value="UniProtKB-KW"/>
</dbReference>
<dbReference type="CDD" id="cd08211">
    <property type="entry name" value="RuBisCO_large_II"/>
    <property type="match status" value="1"/>
</dbReference>
<dbReference type="Gene3D" id="3.20.20.110">
    <property type="entry name" value="Ribulose bisphosphate carboxylase, large subunit, C-terminal domain"/>
    <property type="match status" value="1"/>
</dbReference>
<dbReference type="Gene3D" id="3.30.70.150">
    <property type="entry name" value="RuBisCO large subunit, N-terminal domain"/>
    <property type="match status" value="1"/>
</dbReference>
<dbReference type="HAMAP" id="MF_01339">
    <property type="entry name" value="RuBisCO_L_type2"/>
    <property type="match status" value="1"/>
</dbReference>
<dbReference type="InterPro" id="IPR033966">
    <property type="entry name" value="RuBisCO"/>
</dbReference>
<dbReference type="InterPro" id="IPR020878">
    <property type="entry name" value="RuBisCo_large_chain_AS"/>
</dbReference>
<dbReference type="InterPro" id="IPR000685">
    <property type="entry name" value="RuBisCO_lsu_C"/>
</dbReference>
<dbReference type="InterPro" id="IPR036376">
    <property type="entry name" value="RuBisCO_lsu_C_sf"/>
</dbReference>
<dbReference type="InterPro" id="IPR017443">
    <property type="entry name" value="RuBisCO_lsu_fd_N"/>
</dbReference>
<dbReference type="InterPro" id="IPR036422">
    <property type="entry name" value="RuBisCO_lsu_N_sf"/>
</dbReference>
<dbReference type="InterPro" id="IPR020871">
    <property type="entry name" value="RuBisCO_lsuII"/>
</dbReference>
<dbReference type="NCBIfam" id="NF010002">
    <property type="entry name" value="PRK13475.1"/>
    <property type="match status" value="1"/>
</dbReference>
<dbReference type="PANTHER" id="PTHR42704">
    <property type="entry name" value="RIBULOSE BISPHOSPHATE CARBOXYLASE"/>
    <property type="match status" value="1"/>
</dbReference>
<dbReference type="PANTHER" id="PTHR42704:SF17">
    <property type="entry name" value="RIBULOSE BISPHOSPHATE CARBOXYLASE LARGE CHAIN"/>
    <property type="match status" value="1"/>
</dbReference>
<dbReference type="Pfam" id="PF00016">
    <property type="entry name" value="RuBisCO_large"/>
    <property type="match status" value="1"/>
</dbReference>
<dbReference type="Pfam" id="PF02788">
    <property type="entry name" value="RuBisCO_large_N"/>
    <property type="match status" value="1"/>
</dbReference>
<dbReference type="SFLD" id="SFLDS00014">
    <property type="entry name" value="RuBisCO"/>
    <property type="match status" value="1"/>
</dbReference>
<dbReference type="SFLD" id="SFLDG00301">
    <property type="entry name" value="RuBisCO-like_proteins"/>
    <property type="match status" value="1"/>
</dbReference>
<dbReference type="SUPFAM" id="SSF51649">
    <property type="entry name" value="RuBisCo, C-terminal domain"/>
    <property type="match status" value="1"/>
</dbReference>
<dbReference type="SUPFAM" id="SSF54966">
    <property type="entry name" value="RuBisCO, large subunit, small (N-terminal) domain"/>
    <property type="match status" value="1"/>
</dbReference>
<dbReference type="PROSITE" id="PS00157">
    <property type="entry name" value="RUBISCO_LARGE"/>
    <property type="match status" value="1"/>
</dbReference>
<name>RBL2_RHOPS</name>
<keyword id="KW-0113">Calvin cycle</keyword>
<keyword id="KW-0120">Carbon dioxide fixation</keyword>
<keyword id="KW-0456">Lyase</keyword>
<keyword id="KW-0460">Magnesium</keyword>
<keyword id="KW-0479">Metal-binding</keyword>
<keyword id="KW-0503">Monooxygenase</keyword>
<keyword id="KW-0560">Oxidoreductase</keyword>
<keyword id="KW-0602">Photosynthesis</keyword>
<gene>
    <name evidence="1" type="primary">cbbM</name>
    <name type="ordered locus">RPD_1054</name>
</gene>
<feature type="chain" id="PRO_0000251411" description="Ribulose bisphosphate carboxylase">
    <location>
        <begin position="1"/>
        <end position="461"/>
    </location>
</feature>
<feature type="active site" description="Proton acceptor" evidence="1">
    <location>
        <position position="167"/>
    </location>
</feature>
<feature type="active site" description="Proton acceptor" evidence="1">
    <location>
        <position position="288"/>
    </location>
</feature>
<feature type="binding site" description="in homodimeric partner" evidence="1">
    <location>
        <position position="112"/>
    </location>
    <ligand>
        <name>substrate</name>
    </ligand>
</feature>
<feature type="binding site" evidence="1">
    <location>
        <position position="169"/>
    </location>
    <ligand>
        <name>substrate</name>
    </ligand>
</feature>
<feature type="binding site" description="via carbamate group" evidence="1">
    <location>
        <position position="192"/>
    </location>
    <ligand>
        <name>Mg(2+)</name>
        <dbReference type="ChEBI" id="CHEBI:18420"/>
    </ligand>
</feature>
<feature type="binding site" evidence="1">
    <location>
        <position position="194"/>
    </location>
    <ligand>
        <name>Mg(2+)</name>
        <dbReference type="ChEBI" id="CHEBI:18420"/>
    </ligand>
</feature>
<feature type="binding site" evidence="1">
    <location>
        <position position="195"/>
    </location>
    <ligand>
        <name>Mg(2+)</name>
        <dbReference type="ChEBI" id="CHEBI:18420"/>
    </ligand>
</feature>
<feature type="binding site" evidence="1">
    <location>
        <position position="289"/>
    </location>
    <ligand>
        <name>substrate</name>
    </ligand>
</feature>
<feature type="binding site" evidence="1">
    <location>
        <position position="322"/>
    </location>
    <ligand>
        <name>substrate</name>
    </ligand>
</feature>
<feature type="binding site" evidence="1">
    <location>
        <position position="369"/>
    </location>
    <ligand>
        <name>substrate</name>
    </ligand>
</feature>
<feature type="site" description="Transition state stabilizer" evidence="1">
    <location>
        <position position="330"/>
    </location>
</feature>
<feature type="modified residue" description="N6-carboxylysine" evidence="1">
    <location>
        <position position="192"/>
    </location>
</feature>
<accession>Q37D32</accession>